<accession>Q30TV2</accession>
<organism>
    <name type="scientific">Sulfurimonas denitrificans (strain ATCC 33889 / DSM 1251)</name>
    <name type="common">Thiomicrospira denitrificans (strain ATCC 33889 / DSM 1251)</name>
    <dbReference type="NCBI Taxonomy" id="326298"/>
    <lineage>
        <taxon>Bacteria</taxon>
        <taxon>Pseudomonadati</taxon>
        <taxon>Campylobacterota</taxon>
        <taxon>Epsilonproteobacteria</taxon>
        <taxon>Campylobacterales</taxon>
        <taxon>Sulfurimonadaceae</taxon>
        <taxon>Sulfurimonas</taxon>
    </lineage>
</organism>
<keyword id="KW-1185">Reference proteome</keyword>
<keyword id="KW-0687">Ribonucleoprotein</keyword>
<keyword id="KW-0689">Ribosomal protein</keyword>
<keyword id="KW-0694">RNA-binding</keyword>
<keyword id="KW-0699">rRNA-binding</keyword>
<keyword id="KW-0820">tRNA-binding</keyword>
<sequence>MARMKDKYLALKAELQADLGIKNPMQTPALEKIVISVGAGFAMKDNKLIQNIEDTITTIAGQKASTVIAKKSVAGFKVREGMPVGVRVTLRGEKMYNFFDRLVSMALPRVKDFRGVPRNGFDGRGNYNFGLQEQLIFPEVSYDSVMQIHGMNITVVTSAESDKAGFALLEKMGMPFSKGSN</sequence>
<evidence type="ECO:0000255" key="1">
    <source>
        <dbReference type="HAMAP-Rule" id="MF_01333"/>
    </source>
</evidence>
<evidence type="ECO:0000305" key="2"/>
<name>RL5_SULDN</name>
<reference key="1">
    <citation type="journal article" date="2008" name="Appl. Environ. Microbiol.">
        <title>Genome of the epsilonproteobacterial chemolithoautotroph Sulfurimonas denitrificans.</title>
        <authorList>
            <person name="Sievert S.M."/>
            <person name="Scott K.M."/>
            <person name="Klotz M.G."/>
            <person name="Chain P.S.G."/>
            <person name="Hauser L.J."/>
            <person name="Hemp J."/>
            <person name="Huegler M."/>
            <person name="Land M."/>
            <person name="Lapidus A."/>
            <person name="Larimer F.W."/>
            <person name="Lucas S."/>
            <person name="Malfatti S.A."/>
            <person name="Meyer F."/>
            <person name="Paulsen I.T."/>
            <person name="Ren Q."/>
            <person name="Simon J."/>
            <person name="Bailey K."/>
            <person name="Diaz E."/>
            <person name="Fitzpatrick K.A."/>
            <person name="Glover B."/>
            <person name="Gwatney N."/>
            <person name="Korajkic A."/>
            <person name="Long A."/>
            <person name="Mobberley J.M."/>
            <person name="Pantry S.N."/>
            <person name="Pazder G."/>
            <person name="Peterson S."/>
            <person name="Quintanilla J.D."/>
            <person name="Sprinkle R."/>
            <person name="Stephens J."/>
            <person name="Thomas P."/>
            <person name="Vaughn R."/>
            <person name="Weber M.J."/>
            <person name="Wooten L.L."/>
        </authorList>
    </citation>
    <scope>NUCLEOTIDE SEQUENCE [LARGE SCALE GENOMIC DNA]</scope>
    <source>
        <strain>ATCC 33889 / DSM 1251</strain>
    </source>
</reference>
<proteinExistence type="inferred from homology"/>
<comment type="function">
    <text evidence="1">This is one of the proteins that bind and probably mediate the attachment of the 5S RNA into the large ribosomal subunit, where it forms part of the central protuberance. In the 70S ribosome it contacts protein S13 of the 30S subunit (bridge B1b), connecting the 2 subunits; this bridge is implicated in subunit movement. Contacts the P site tRNA; the 5S rRNA and some of its associated proteins might help stabilize positioning of ribosome-bound tRNAs.</text>
</comment>
<comment type="subunit">
    <text evidence="1">Part of the 50S ribosomal subunit; part of the 5S rRNA/L5/L18/L25 subcomplex. Contacts the 5S rRNA and the P site tRNA. Forms a bridge to the 30S subunit in the 70S ribosome.</text>
</comment>
<comment type="similarity">
    <text evidence="1">Belongs to the universal ribosomal protein uL5 family.</text>
</comment>
<protein>
    <recommendedName>
        <fullName evidence="1">Large ribosomal subunit protein uL5</fullName>
    </recommendedName>
    <alternativeName>
        <fullName evidence="2">50S ribosomal protein L5</fullName>
    </alternativeName>
</protein>
<dbReference type="EMBL" id="CP000153">
    <property type="protein sequence ID" value="ABB43579.1"/>
    <property type="molecule type" value="Genomic_DNA"/>
</dbReference>
<dbReference type="RefSeq" id="WP_011371934.1">
    <property type="nucleotide sequence ID" value="NC_007575.1"/>
</dbReference>
<dbReference type="SMR" id="Q30TV2"/>
<dbReference type="STRING" id="326298.Suden_0298"/>
<dbReference type="KEGG" id="tdn:Suden_0298"/>
<dbReference type="eggNOG" id="COG0094">
    <property type="taxonomic scope" value="Bacteria"/>
</dbReference>
<dbReference type="HOGENOM" id="CLU_061015_2_1_7"/>
<dbReference type="OrthoDB" id="9806626at2"/>
<dbReference type="Proteomes" id="UP000002714">
    <property type="component" value="Chromosome"/>
</dbReference>
<dbReference type="GO" id="GO:1990904">
    <property type="term" value="C:ribonucleoprotein complex"/>
    <property type="evidence" value="ECO:0007669"/>
    <property type="project" value="UniProtKB-KW"/>
</dbReference>
<dbReference type="GO" id="GO:0005840">
    <property type="term" value="C:ribosome"/>
    <property type="evidence" value="ECO:0007669"/>
    <property type="project" value="UniProtKB-KW"/>
</dbReference>
<dbReference type="GO" id="GO:0019843">
    <property type="term" value="F:rRNA binding"/>
    <property type="evidence" value="ECO:0007669"/>
    <property type="project" value="UniProtKB-UniRule"/>
</dbReference>
<dbReference type="GO" id="GO:0003735">
    <property type="term" value="F:structural constituent of ribosome"/>
    <property type="evidence" value="ECO:0007669"/>
    <property type="project" value="InterPro"/>
</dbReference>
<dbReference type="GO" id="GO:0000049">
    <property type="term" value="F:tRNA binding"/>
    <property type="evidence" value="ECO:0007669"/>
    <property type="project" value="UniProtKB-UniRule"/>
</dbReference>
<dbReference type="GO" id="GO:0006412">
    <property type="term" value="P:translation"/>
    <property type="evidence" value="ECO:0007669"/>
    <property type="project" value="UniProtKB-UniRule"/>
</dbReference>
<dbReference type="FunFam" id="3.30.1440.10:FF:000001">
    <property type="entry name" value="50S ribosomal protein L5"/>
    <property type="match status" value="1"/>
</dbReference>
<dbReference type="Gene3D" id="3.30.1440.10">
    <property type="match status" value="1"/>
</dbReference>
<dbReference type="HAMAP" id="MF_01333_B">
    <property type="entry name" value="Ribosomal_uL5_B"/>
    <property type="match status" value="1"/>
</dbReference>
<dbReference type="InterPro" id="IPR002132">
    <property type="entry name" value="Ribosomal_uL5"/>
</dbReference>
<dbReference type="InterPro" id="IPR020930">
    <property type="entry name" value="Ribosomal_uL5_bac-type"/>
</dbReference>
<dbReference type="InterPro" id="IPR031309">
    <property type="entry name" value="Ribosomal_uL5_C"/>
</dbReference>
<dbReference type="InterPro" id="IPR022803">
    <property type="entry name" value="Ribosomal_uL5_dom_sf"/>
</dbReference>
<dbReference type="InterPro" id="IPR031310">
    <property type="entry name" value="Ribosomal_uL5_N"/>
</dbReference>
<dbReference type="NCBIfam" id="NF000585">
    <property type="entry name" value="PRK00010.1"/>
    <property type="match status" value="1"/>
</dbReference>
<dbReference type="PANTHER" id="PTHR11994">
    <property type="entry name" value="60S RIBOSOMAL PROTEIN L11-RELATED"/>
    <property type="match status" value="1"/>
</dbReference>
<dbReference type="Pfam" id="PF00281">
    <property type="entry name" value="Ribosomal_L5"/>
    <property type="match status" value="1"/>
</dbReference>
<dbReference type="Pfam" id="PF00673">
    <property type="entry name" value="Ribosomal_L5_C"/>
    <property type="match status" value="1"/>
</dbReference>
<dbReference type="PIRSF" id="PIRSF002161">
    <property type="entry name" value="Ribosomal_L5"/>
    <property type="match status" value="1"/>
</dbReference>
<dbReference type="SUPFAM" id="SSF55282">
    <property type="entry name" value="RL5-like"/>
    <property type="match status" value="1"/>
</dbReference>
<gene>
    <name evidence="1" type="primary">rplE</name>
    <name type="ordered locus">Suden_0298</name>
</gene>
<feature type="chain" id="PRO_0000243083" description="Large ribosomal subunit protein uL5">
    <location>
        <begin position="1"/>
        <end position="181"/>
    </location>
</feature>